<gene>
    <name evidence="1" type="primary">hemA</name>
    <name type="ordered locus">HCH_01731</name>
</gene>
<accession>Q2SL96</accession>
<reference key="1">
    <citation type="journal article" date="2005" name="Nucleic Acids Res.">
        <title>Genomic blueprint of Hahella chejuensis, a marine microbe producing an algicidal agent.</title>
        <authorList>
            <person name="Jeong H."/>
            <person name="Yim J.H."/>
            <person name="Lee C."/>
            <person name="Choi S.-H."/>
            <person name="Park Y.K."/>
            <person name="Yoon S.H."/>
            <person name="Hur C.-G."/>
            <person name="Kang H.-Y."/>
            <person name="Kim D."/>
            <person name="Lee H.H."/>
            <person name="Park K.H."/>
            <person name="Park S.-H."/>
            <person name="Park H.-S."/>
            <person name="Lee H.K."/>
            <person name="Oh T.K."/>
            <person name="Kim J.F."/>
        </authorList>
    </citation>
    <scope>NUCLEOTIDE SEQUENCE [LARGE SCALE GENOMIC DNA]</scope>
    <source>
        <strain>KCTC 2396</strain>
    </source>
</reference>
<feature type="chain" id="PRO_0000335044" description="Glutamyl-tRNA reductase">
    <location>
        <begin position="1"/>
        <end position="424"/>
    </location>
</feature>
<feature type="active site" description="Nucleophile" evidence="1">
    <location>
        <position position="50"/>
    </location>
</feature>
<feature type="binding site" evidence="1">
    <location>
        <begin position="49"/>
        <end position="52"/>
    </location>
    <ligand>
        <name>substrate</name>
    </ligand>
</feature>
<feature type="binding site" evidence="1">
    <location>
        <position position="108"/>
    </location>
    <ligand>
        <name>substrate</name>
    </ligand>
</feature>
<feature type="binding site" evidence="1">
    <location>
        <begin position="113"/>
        <end position="115"/>
    </location>
    <ligand>
        <name>substrate</name>
    </ligand>
</feature>
<feature type="binding site" evidence="1">
    <location>
        <position position="119"/>
    </location>
    <ligand>
        <name>substrate</name>
    </ligand>
</feature>
<feature type="binding site" evidence="1">
    <location>
        <begin position="188"/>
        <end position="193"/>
    </location>
    <ligand>
        <name>NADP(+)</name>
        <dbReference type="ChEBI" id="CHEBI:58349"/>
    </ligand>
</feature>
<feature type="site" description="Important for activity" evidence="1">
    <location>
        <position position="98"/>
    </location>
</feature>
<protein>
    <recommendedName>
        <fullName evidence="1">Glutamyl-tRNA reductase</fullName>
        <shortName evidence="1">GluTR</shortName>
        <ecNumber evidence="1">1.2.1.70</ecNumber>
    </recommendedName>
</protein>
<dbReference type="EC" id="1.2.1.70" evidence="1"/>
<dbReference type="EMBL" id="CP000155">
    <property type="protein sequence ID" value="ABC28578.1"/>
    <property type="status" value="ALT_INIT"/>
    <property type="molecule type" value="Genomic_DNA"/>
</dbReference>
<dbReference type="RefSeq" id="WP_011395650.1">
    <property type="nucleotide sequence ID" value="NC_007645.1"/>
</dbReference>
<dbReference type="SMR" id="Q2SL96"/>
<dbReference type="STRING" id="349521.HCH_01731"/>
<dbReference type="KEGG" id="hch:HCH_01731"/>
<dbReference type="eggNOG" id="COG0373">
    <property type="taxonomic scope" value="Bacteria"/>
</dbReference>
<dbReference type="HOGENOM" id="CLU_035113_2_2_6"/>
<dbReference type="OrthoDB" id="110209at2"/>
<dbReference type="UniPathway" id="UPA00251">
    <property type="reaction ID" value="UER00316"/>
</dbReference>
<dbReference type="Proteomes" id="UP000000238">
    <property type="component" value="Chromosome"/>
</dbReference>
<dbReference type="GO" id="GO:0008883">
    <property type="term" value="F:glutamyl-tRNA reductase activity"/>
    <property type="evidence" value="ECO:0007669"/>
    <property type="project" value="UniProtKB-UniRule"/>
</dbReference>
<dbReference type="GO" id="GO:0050661">
    <property type="term" value="F:NADP binding"/>
    <property type="evidence" value="ECO:0007669"/>
    <property type="project" value="InterPro"/>
</dbReference>
<dbReference type="GO" id="GO:0019353">
    <property type="term" value="P:protoporphyrinogen IX biosynthetic process from glutamate"/>
    <property type="evidence" value="ECO:0007669"/>
    <property type="project" value="TreeGrafter"/>
</dbReference>
<dbReference type="CDD" id="cd05213">
    <property type="entry name" value="NAD_bind_Glutamyl_tRNA_reduct"/>
    <property type="match status" value="1"/>
</dbReference>
<dbReference type="FunFam" id="3.30.460.30:FF:000001">
    <property type="entry name" value="Glutamyl-tRNA reductase"/>
    <property type="match status" value="1"/>
</dbReference>
<dbReference type="FunFam" id="3.40.50.720:FF:000031">
    <property type="entry name" value="Glutamyl-tRNA reductase"/>
    <property type="match status" value="1"/>
</dbReference>
<dbReference type="Gene3D" id="3.30.460.30">
    <property type="entry name" value="Glutamyl-tRNA reductase, N-terminal domain"/>
    <property type="match status" value="1"/>
</dbReference>
<dbReference type="Gene3D" id="3.40.50.720">
    <property type="entry name" value="NAD(P)-binding Rossmann-like Domain"/>
    <property type="match status" value="1"/>
</dbReference>
<dbReference type="HAMAP" id="MF_00087">
    <property type="entry name" value="Glu_tRNA_reductase"/>
    <property type="match status" value="1"/>
</dbReference>
<dbReference type="InterPro" id="IPR000343">
    <property type="entry name" value="4pyrrol_synth_GluRdtase"/>
</dbReference>
<dbReference type="InterPro" id="IPR015896">
    <property type="entry name" value="4pyrrol_synth_GluRdtase_dimer"/>
</dbReference>
<dbReference type="InterPro" id="IPR015895">
    <property type="entry name" value="4pyrrol_synth_GluRdtase_N"/>
</dbReference>
<dbReference type="InterPro" id="IPR018214">
    <property type="entry name" value="GluRdtase_CS"/>
</dbReference>
<dbReference type="InterPro" id="IPR036453">
    <property type="entry name" value="GluRdtase_dimer_dom_sf"/>
</dbReference>
<dbReference type="InterPro" id="IPR036343">
    <property type="entry name" value="GluRdtase_N_sf"/>
</dbReference>
<dbReference type="InterPro" id="IPR036291">
    <property type="entry name" value="NAD(P)-bd_dom_sf"/>
</dbReference>
<dbReference type="InterPro" id="IPR006151">
    <property type="entry name" value="Shikm_DH/Glu-tRNA_Rdtase"/>
</dbReference>
<dbReference type="NCBIfam" id="TIGR01035">
    <property type="entry name" value="hemA"/>
    <property type="match status" value="1"/>
</dbReference>
<dbReference type="PANTHER" id="PTHR43013">
    <property type="entry name" value="GLUTAMYL-TRNA REDUCTASE"/>
    <property type="match status" value="1"/>
</dbReference>
<dbReference type="PANTHER" id="PTHR43013:SF1">
    <property type="entry name" value="GLUTAMYL-TRNA REDUCTASE"/>
    <property type="match status" value="1"/>
</dbReference>
<dbReference type="Pfam" id="PF00745">
    <property type="entry name" value="GlutR_dimer"/>
    <property type="match status" value="1"/>
</dbReference>
<dbReference type="Pfam" id="PF05201">
    <property type="entry name" value="GlutR_N"/>
    <property type="match status" value="1"/>
</dbReference>
<dbReference type="Pfam" id="PF01488">
    <property type="entry name" value="Shikimate_DH"/>
    <property type="match status" value="1"/>
</dbReference>
<dbReference type="PIRSF" id="PIRSF000445">
    <property type="entry name" value="4pyrrol_synth_GluRdtase"/>
    <property type="match status" value="1"/>
</dbReference>
<dbReference type="SUPFAM" id="SSF69742">
    <property type="entry name" value="Glutamyl tRNA-reductase catalytic, N-terminal domain"/>
    <property type="match status" value="1"/>
</dbReference>
<dbReference type="SUPFAM" id="SSF69075">
    <property type="entry name" value="Glutamyl tRNA-reductase dimerization domain"/>
    <property type="match status" value="1"/>
</dbReference>
<dbReference type="SUPFAM" id="SSF51735">
    <property type="entry name" value="NAD(P)-binding Rossmann-fold domains"/>
    <property type="match status" value="1"/>
</dbReference>
<dbReference type="PROSITE" id="PS00747">
    <property type="entry name" value="GLUTR"/>
    <property type="match status" value="1"/>
</dbReference>
<proteinExistence type="inferred from homology"/>
<name>HEM1_HAHCH</name>
<keyword id="KW-0521">NADP</keyword>
<keyword id="KW-0560">Oxidoreductase</keyword>
<keyword id="KW-0627">Porphyrin biosynthesis</keyword>
<keyword id="KW-1185">Reference proteome</keyword>
<sequence length="424" mass="46840">MALFVISINHKTAPVAIREKVAFGPEKLADALERLRCRPDIDEVTILSTCNRTELYCATPGEPDEISLIEWLGQYHQVSLTELKACCNIYNDEDAAQHMMRVASGIDSMVLGEPQILGQMKEAHASGRAAGSLGGPLDRLFQHAFAVAKRVRTETAIGENPVSVAYAAVSMASHIFSNMEQNTALLIGAGETIELVARHLYRAGVRSLIVANRTLSRARDLAAEFHGSAIGLSDIPEYLHRADIVIASTASPLPILGKGAVEKALKRRKHKPMFMVDIAVPRDIEEEVSELADVYLYTVDDLRQVIEDNMKSREGAAEEAERLIAAGAADFMYHLRALDSVSVLRRFRDQAEGVRDAELQKAIRLLNRGDDPESVLRMLAHGLTNKLIHHPTVQVRRASAEGRQEVTGWLRDLFQLPDEKVNND</sequence>
<evidence type="ECO:0000255" key="1">
    <source>
        <dbReference type="HAMAP-Rule" id="MF_00087"/>
    </source>
</evidence>
<evidence type="ECO:0000305" key="2"/>
<comment type="function">
    <text evidence="1">Catalyzes the NADPH-dependent reduction of glutamyl-tRNA(Glu) to glutamate 1-semialdehyde (GSA).</text>
</comment>
<comment type="catalytic activity">
    <reaction evidence="1">
        <text>(S)-4-amino-5-oxopentanoate + tRNA(Glu) + NADP(+) = L-glutamyl-tRNA(Glu) + NADPH + H(+)</text>
        <dbReference type="Rhea" id="RHEA:12344"/>
        <dbReference type="Rhea" id="RHEA-COMP:9663"/>
        <dbReference type="Rhea" id="RHEA-COMP:9680"/>
        <dbReference type="ChEBI" id="CHEBI:15378"/>
        <dbReference type="ChEBI" id="CHEBI:57501"/>
        <dbReference type="ChEBI" id="CHEBI:57783"/>
        <dbReference type="ChEBI" id="CHEBI:58349"/>
        <dbReference type="ChEBI" id="CHEBI:78442"/>
        <dbReference type="ChEBI" id="CHEBI:78520"/>
        <dbReference type="EC" id="1.2.1.70"/>
    </reaction>
</comment>
<comment type="pathway">
    <text evidence="1">Porphyrin-containing compound metabolism; protoporphyrin-IX biosynthesis; 5-aminolevulinate from L-glutamyl-tRNA(Glu): step 1/2.</text>
</comment>
<comment type="subunit">
    <text evidence="1">Homodimer.</text>
</comment>
<comment type="domain">
    <text evidence="1">Possesses an unusual extended V-shaped dimeric structure with each monomer consisting of three distinct domains arranged along a curved 'spinal' alpha-helix. The N-terminal catalytic domain specifically recognizes the glutamate moiety of the substrate. The second domain is the NADPH-binding domain, and the third C-terminal domain is responsible for dimerization.</text>
</comment>
<comment type="miscellaneous">
    <text evidence="1">During catalysis, the active site Cys acts as a nucleophile attacking the alpha-carbonyl group of tRNA-bound glutamate with the formation of a thioester intermediate between enzyme and glutamate, and the concomitant release of tRNA(Glu). The thioester intermediate is finally reduced by direct hydride transfer from NADPH, to form the product GSA.</text>
</comment>
<comment type="similarity">
    <text evidence="1">Belongs to the glutamyl-tRNA reductase family.</text>
</comment>
<comment type="sequence caution" evidence="2">
    <conflict type="erroneous initiation">
        <sequence resource="EMBL-CDS" id="ABC28578"/>
    </conflict>
</comment>
<organism>
    <name type="scientific">Hahella chejuensis (strain KCTC 2396)</name>
    <dbReference type="NCBI Taxonomy" id="349521"/>
    <lineage>
        <taxon>Bacteria</taxon>
        <taxon>Pseudomonadati</taxon>
        <taxon>Pseudomonadota</taxon>
        <taxon>Gammaproteobacteria</taxon>
        <taxon>Oceanospirillales</taxon>
        <taxon>Hahellaceae</taxon>
        <taxon>Hahella</taxon>
    </lineage>
</organism>